<accession>Q14JR2</accession>
<keyword id="KW-0521">NADP</keyword>
<keyword id="KW-0560">Oxidoreductase</keyword>
<keyword id="KW-0627">Porphyrin biosynthesis</keyword>
<dbReference type="EC" id="1.2.1.70" evidence="1"/>
<dbReference type="EMBL" id="AM286280">
    <property type="protein sequence ID" value="CAL08183.1"/>
    <property type="molecule type" value="Genomic_DNA"/>
</dbReference>
<dbReference type="SMR" id="Q14JR2"/>
<dbReference type="KEGG" id="ftf:FTF0167"/>
<dbReference type="HOGENOM" id="CLU_035113_1_0_6"/>
<dbReference type="UniPathway" id="UPA00251">
    <property type="reaction ID" value="UER00316"/>
</dbReference>
<dbReference type="GO" id="GO:0008883">
    <property type="term" value="F:glutamyl-tRNA reductase activity"/>
    <property type="evidence" value="ECO:0007669"/>
    <property type="project" value="UniProtKB-UniRule"/>
</dbReference>
<dbReference type="GO" id="GO:0050661">
    <property type="term" value="F:NADP binding"/>
    <property type="evidence" value="ECO:0007669"/>
    <property type="project" value="InterPro"/>
</dbReference>
<dbReference type="GO" id="GO:0019353">
    <property type="term" value="P:protoporphyrinogen IX biosynthetic process from glutamate"/>
    <property type="evidence" value="ECO:0007669"/>
    <property type="project" value="TreeGrafter"/>
</dbReference>
<dbReference type="CDD" id="cd05213">
    <property type="entry name" value="NAD_bind_Glutamyl_tRNA_reduct"/>
    <property type="match status" value="1"/>
</dbReference>
<dbReference type="FunFam" id="3.30.460.30:FF:000001">
    <property type="entry name" value="Glutamyl-tRNA reductase"/>
    <property type="match status" value="1"/>
</dbReference>
<dbReference type="Gene3D" id="3.30.460.30">
    <property type="entry name" value="Glutamyl-tRNA reductase, N-terminal domain"/>
    <property type="match status" value="1"/>
</dbReference>
<dbReference type="Gene3D" id="3.40.50.720">
    <property type="entry name" value="NAD(P)-binding Rossmann-like Domain"/>
    <property type="match status" value="1"/>
</dbReference>
<dbReference type="HAMAP" id="MF_00087">
    <property type="entry name" value="Glu_tRNA_reductase"/>
    <property type="match status" value="1"/>
</dbReference>
<dbReference type="InterPro" id="IPR000343">
    <property type="entry name" value="4pyrrol_synth_GluRdtase"/>
</dbReference>
<dbReference type="InterPro" id="IPR015896">
    <property type="entry name" value="4pyrrol_synth_GluRdtase_dimer"/>
</dbReference>
<dbReference type="InterPro" id="IPR015895">
    <property type="entry name" value="4pyrrol_synth_GluRdtase_N"/>
</dbReference>
<dbReference type="InterPro" id="IPR018214">
    <property type="entry name" value="GluRdtase_CS"/>
</dbReference>
<dbReference type="InterPro" id="IPR036453">
    <property type="entry name" value="GluRdtase_dimer_dom_sf"/>
</dbReference>
<dbReference type="InterPro" id="IPR036343">
    <property type="entry name" value="GluRdtase_N_sf"/>
</dbReference>
<dbReference type="InterPro" id="IPR036291">
    <property type="entry name" value="NAD(P)-bd_dom_sf"/>
</dbReference>
<dbReference type="InterPro" id="IPR006151">
    <property type="entry name" value="Shikm_DH/Glu-tRNA_Rdtase"/>
</dbReference>
<dbReference type="NCBIfam" id="TIGR01035">
    <property type="entry name" value="hemA"/>
    <property type="match status" value="1"/>
</dbReference>
<dbReference type="NCBIfam" id="NF010548">
    <property type="entry name" value="PRK13940.1"/>
    <property type="match status" value="1"/>
</dbReference>
<dbReference type="PANTHER" id="PTHR43013">
    <property type="entry name" value="GLUTAMYL-TRNA REDUCTASE"/>
    <property type="match status" value="1"/>
</dbReference>
<dbReference type="PANTHER" id="PTHR43013:SF1">
    <property type="entry name" value="GLUTAMYL-TRNA REDUCTASE"/>
    <property type="match status" value="1"/>
</dbReference>
<dbReference type="Pfam" id="PF00745">
    <property type="entry name" value="GlutR_dimer"/>
    <property type="match status" value="1"/>
</dbReference>
<dbReference type="Pfam" id="PF05201">
    <property type="entry name" value="GlutR_N"/>
    <property type="match status" value="1"/>
</dbReference>
<dbReference type="Pfam" id="PF01488">
    <property type="entry name" value="Shikimate_DH"/>
    <property type="match status" value="1"/>
</dbReference>
<dbReference type="PIRSF" id="PIRSF000445">
    <property type="entry name" value="4pyrrol_synth_GluRdtase"/>
    <property type="match status" value="1"/>
</dbReference>
<dbReference type="SUPFAM" id="SSF69742">
    <property type="entry name" value="Glutamyl tRNA-reductase catalytic, N-terminal domain"/>
    <property type="match status" value="1"/>
</dbReference>
<dbReference type="SUPFAM" id="SSF69075">
    <property type="entry name" value="Glutamyl tRNA-reductase dimerization domain"/>
    <property type="match status" value="1"/>
</dbReference>
<dbReference type="SUPFAM" id="SSF51735">
    <property type="entry name" value="NAD(P)-binding Rossmann-fold domains"/>
    <property type="match status" value="1"/>
</dbReference>
<dbReference type="PROSITE" id="PS00747">
    <property type="entry name" value="GLUTR"/>
    <property type="match status" value="1"/>
</dbReference>
<organism>
    <name type="scientific">Francisella tularensis subsp. tularensis (strain FSC 198)</name>
    <dbReference type="NCBI Taxonomy" id="393115"/>
    <lineage>
        <taxon>Bacteria</taxon>
        <taxon>Pseudomonadati</taxon>
        <taxon>Pseudomonadota</taxon>
        <taxon>Gammaproteobacteria</taxon>
        <taxon>Thiotrichales</taxon>
        <taxon>Francisellaceae</taxon>
        <taxon>Francisella</taxon>
    </lineage>
</organism>
<sequence length="416" mass="46976">MNMALISLAIDYKKSPIEVRSEFALSGLDVSMLYRSILAIDNVVHAVILSTCNRTEVYLEISDLRVVDDILVWWQGYVRNPNYKIKDYFKLRQGTEVIMHLMKLACGLESMVLGEPQILGQVKDSYTLSKKNHAIGKELDRVFQKVFATAKRVRSETRIGHCPVSVAFSAITLAKRQLDNISSKNVLIIGAGQTGELLFRHVTALAPKQIMLANRTIEKAQKITSAFRNASAHYLSELPQLIKKADIIIAAVNVLEYIVTCKYVGDKPRVFIDISIPQALDPKLGELEQNVYYCVDDINAVIEDNKDKRKYESSKAQKIIVKSLEEYLEKEKAIISNSAIKELFQKADGLVDLSLEKSLAKIRNGKDAEEIIKRFAYEIKKKVLHYPVVGMKEASKQGRSDCLVCMKRMFGLNVEK</sequence>
<feature type="chain" id="PRO_0000335037" description="Glutamyl-tRNA reductase">
    <location>
        <begin position="1"/>
        <end position="416"/>
    </location>
</feature>
<feature type="active site" description="Nucleophile" evidence="1">
    <location>
        <position position="52"/>
    </location>
</feature>
<feature type="binding site" evidence="1">
    <location>
        <begin position="51"/>
        <end position="54"/>
    </location>
    <ligand>
        <name>substrate</name>
    </ligand>
</feature>
<feature type="binding site" evidence="1">
    <location>
        <position position="110"/>
    </location>
    <ligand>
        <name>substrate</name>
    </ligand>
</feature>
<feature type="binding site" evidence="1">
    <location>
        <begin position="115"/>
        <end position="117"/>
    </location>
    <ligand>
        <name>substrate</name>
    </ligand>
</feature>
<feature type="binding site" evidence="1">
    <location>
        <position position="121"/>
    </location>
    <ligand>
        <name>substrate</name>
    </ligand>
</feature>
<feature type="binding site" evidence="1">
    <location>
        <begin position="190"/>
        <end position="195"/>
    </location>
    <ligand>
        <name>NADP(+)</name>
        <dbReference type="ChEBI" id="CHEBI:58349"/>
    </ligand>
</feature>
<feature type="site" description="Important for activity" evidence="1">
    <location>
        <position position="100"/>
    </location>
</feature>
<evidence type="ECO:0000255" key="1">
    <source>
        <dbReference type="HAMAP-Rule" id="MF_00087"/>
    </source>
</evidence>
<gene>
    <name evidence="1" type="primary">hemA</name>
    <name type="ordered locus">FTF0167</name>
</gene>
<comment type="function">
    <text evidence="1">Catalyzes the NADPH-dependent reduction of glutamyl-tRNA(Glu) to glutamate 1-semialdehyde (GSA).</text>
</comment>
<comment type="catalytic activity">
    <reaction evidence="1">
        <text>(S)-4-amino-5-oxopentanoate + tRNA(Glu) + NADP(+) = L-glutamyl-tRNA(Glu) + NADPH + H(+)</text>
        <dbReference type="Rhea" id="RHEA:12344"/>
        <dbReference type="Rhea" id="RHEA-COMP:9663"/>
        <dbReference type="Rhea" id="RHEA-COMP:9680"/>
        <dbReference type="ChEBI" id="CHEBI:15378"/>
        <dbReference type="ChEBI" id="CHEBI:57501"/>
        <dbReference type="ChEBI" id="CHEBI:57783"/>
        <dbReference type="ChEBI" id="CHEBI:58349"/>
        <dbReference type="ChEBI" id="CHEBI:78442"/>
        <dbReference type="ChEBI" id="CHEBI:78520"/>
        <dbReference type="EC" id="1.2.1.70"/>
    </reaction>
</comment>
<comment type="pathway">
    <text evidence="1">Porphyrin-containing compound metabolism; protoporphyrin-IX biosynthesis; 5-aminolevulinate from L-glutamyl-tRNA(Glu): step 1/2.</text>
</comment>
<comment type="subunit">
    <text evidence="1">Homodimer.</text>
</comment>
<comment type="domain">
    <text evidence="1">Possesses an unusual extended V-shaped dimeric structure with each monomer consisting of three distinct domains arranged along a curved 'spinal' alpha-helix. The N-terminal catalytic domain specifically recognizes the glutamate moiety of the substrate. The second domain is the NADPH-binding domain, and the third C-terminal domain is responsible for dimerization.</text>
</comment>
<comment type="miscellaneous">
    <text evidence="1">During catalysis, the active site Cys acts as a nucleophile attacking the alpha-carbonyl group of tRNA-bound glutamate with the formation of a thioester intermediate between enzyme and glutamate, and the concomitant release of tRNA(Glu). The thioester intermediate is finally reduced by direct hydride transfer from NADPH, to form the product GSA.</text>
</comment>
<comment type="similarity">
    <text evidence="1">Belongs to the glutamyl-tRNA reductase family.</text>
</comment>
<proteinExistence type="inferred from homology"/>
<reference key="1">
    <citation type="journal article" date="2007" name="PLoS ONE">
        <title>Genome sequencing shows that European isolates of Francisella tularensis subspecies tularensis are almost identical to US laboratory strain Schu S4.</title>
        <authorList>
            <person name="Chaudhuri R.R."/>
            <person name="Ren C.-P."/>
            <person name="Desmond L."/>
            <person name="Vincent G.A."/>
            <person name="Silman N.J."/>
            <person name="Brehm J.K."/>
            <person name="Elmore M.J."/>
            <person name="Hudson M.J."/>
            <person name="Forsman M."/>
            <person name="Isherwood K.E."/>
            <person name="Gurycova D."/>
            <person name="Minton N.P."/>
            <person name="Titball R.W."/>
            <person name="Pallen M.J."/>
            <person name="Vipond R."/>
        </authorList>
    </citation>
    <scope>NUCLEOTIDE SEQUENCE [LARGE SCALE GENOMIC DNA]</scope>
    <source>
        <strain>FSC 198</strain>
    </source>
</reference>
<protein>
    <recommendedName>
        <fullName evidence="1">Glutamyl-tRNA reductase</fullName>
        <shortName evidence="1">GluTR</shortName>
        <ecNumber evidence="1">1.2.1.70</ecNumber>
    </recommendedName>
</protein>
<name>HEM1_FRAT1</name>